<protein>
    <recommendedName>
        <fullName evidence="1">Large ribosomal subunit protein uL23</fullName>
    </recommendedName>
    <alternativeName>
        <fullName evidence="2">50S ribosomal protein L23</fullName>
    </alternativeName>
</protein>
<comment type="function">
    <text evidence="1">One of the early assembly proteins it binds 23S rRNA. One of the proteins that surrounds the polypeptide exit tunnel on the outside of the ribosome. Forms the main docking site for trigger factor binding to the ribosome.</text>
</comment>
<comment type="subunit">
    <text evidence="1">Part of the 50S ribosomal subunit. Contacts protein L29, and trigger factor when it is bound to the ribosome.</text>
</comment>
<comment type="similarity">
    <text evidence="1">Belongs to the universal ribosomal protein uL23 family.</text>
</comment>
<reference key="1">
    <citation type="submission" date="2006-12" db="EMBL/GenBank/DDBJ databases">
        <title>Complete sequence of Chlorobium phaeobacteroides DSM 266.</title>
        <authorList>
            <consortium name="US DOE Joint Genome Institute"/>
            <person name="Copeland A."/>
            <person name="Lucas S."/>
            <person name="Lapidus A."/>
            <person name="Barry K."/>
            <person name="Detter J.C."/>
            <person name="Glavina del Rio T."/>
            <person name="Hammon N."/>
            <person name="Israni S."/>
            <person name="Pitluck S."/>
            <person name="Goltsman E."/>
            <person name="Schmutz J."/>
            <person name="Larimer F."/>
            <person name="Land M."/>
            <person name="Hauser L."/>
            <person name="Mikhailova N."/>
            <person name="Li T."/>
            <person name="Overmann J."/>
            <person name="Bryant D.A."/>
            <person name="Richardson P."/>
        </authorList>
    </citation>
    <scope>NUCLEOTIDE SEQUENCE [LARGE SCALE GENOMIC DNA]</scope>
    <source>
        <strain>DSM 266 / SMG 266 / 2430</strain>
    </source>
</reference>
<gene>
    <name evidence="1" type="primary">rplW</name>
    <name type="ordered locus">Cpha266_2421</name>
</gene>
<sequence length="103" mass="11610">MKNPLLRPWLTEKSTGLTEKKGQYVFKVKLDADKTDIKKAIEEKFGVVVKSVRTVNCLGKSKRQFTRKGVLQGKKSDWKKAIVTLAKDQSIDYYSGSTQKGEG</sequence>
<accession>A1BJ32</accession>
<feature type="chain" id="PRO_1000068060" description="Large ribosomal subunit protein uL23">
    <location>
        <begin position="1"/>
        <end position="103"/>
    </location>
</feature>
<name>RL23_CHLPD</name>
<keyword id="KW-1185">Reference proteome</keyword>
<keyword id="KW-0687">Ribonucleoprotein</keyword>
<keyword id="KW-0689">Ribosomal protein</keyword>
<keyword id="KW-0694">RNA-binding</keyword>
<keyword id="KW-0699">rRNA-binding</keyword>
<proteinExistence type="inferred from homology"/>
<dbReference type="EMBL" id="CP000492">
    <property type="protein sequence ID" value="ABL66409.1"/>
    <property type="molecule type" value="Genomic_DNA"/>
</dbReference>
<dbReference type="RefSeq" id="WP_011746191.1">
    <property type="nucleotide sequence ID" value="NC_008639.1"/>
</dbReference>
<dbReference type="SMR" id="A1BJ32"/>
<dbReference type="STRING" id="290317.Cpha266_2421"/>
<dbReference type="KEGG" id="cph:Cpha266_2421"/>
<dbReference type="eggNOG" id="COG0089">
    <property type="taxonomic scope" value="Bacteria"/>
</dbReference>
<dbReference type="HOGENOM" id="CLU_037562_3_0_10"/>
<dbReference type="OrthoDB" id="9797862at2"/>
<dbReference type="Proteomes" id="UP000008701">
    <property type="component" value="Chromosome"/>
</dbReference>
<dbReference type="GO" id="GO:1990904">
    <property type="term" value="C:ribonucleoprotein complex"/>
    <property type="evidence" value="ECO:0007669"/>
    <property type="project" value="UniProtKB-KW"/>
</dbReference>
<dbReference type="GO" id="GO:0005840">
    <property type="term" value="C:ribosome"/>
    <property type="evidence" value="ECO:0007669"/>
    <property type="project" value="UniProtKB-KW"/>
</dbReference>
<dbReference type="GO" id="GO:0019843">
    <property type="term" value="F:rRNA binding"/>
    <property type="evidence" value="ECO:0007669"/>
    <property type="project" value="UniProtKB-UniRule"/>
</dbReference>
<dbReference type="GO" id="GO:0003735">
    <property type="term" value="F:structural constituent of ribosome"/>
    <property type="evidence" value="ECO:0007669"/>
    <property type="project" value="InterPro"/>
</dbReference>
<dbReference type="GO" id="GO:0006412">
    <property type="term" value="P:translation"/>
    <property type="evidence" value="ECO:0007669"/>
    <property type="project" value="UniProtKB-UniRule"/>
</dbReference>
<dbReference type="FunFam" id="3.30.70.330:FF:000001">
    <property type="entry name" value="50S ribosomal protein L23"/>
    <property type="match status" value="1"/>
</dbReference>
<dbReference type="Gene3D" id="3.30.70.330">
    <property type="match status" value="1"/>
</dbReference>
<dbReference type="HAMAP" id="MF_01369_B">
    <property type="entry name" value="Ribosomal_uL23_B"/>
    <property type="match status" value="1"/>
</dbReference>
<dbReference type="InterPro" id="IPR012677">
    <property type="entry name" value="Nucleotide-bd_a/b_plait_sf"/>
</dbReference>
<dbReference type="InterPro" id="IPR013025">
    <property type="entry name" value="Ribosomal_uL23-like"/>
</dbReference>
<dbReference type="InterPro" id="IPR012678">
    <property type="entry name" value="Ribosomal_uL23/eL15/eS24_sf"/>
</dbReference>
<dbReference type="NCBIfam" id="NF004363">
    <property type="entry name" value="PRK05738.2-4"/>
    <property type="match status" value="1"/>
</dbReference>
<dbReference type="PANTHER" id="PTHR11620">
    <property type="entry name" value="60S RIBOSOMAL PROTEIN L23A"/>
    <property type="match status" value="1"/>
</dbReference>
<dbReference type="Pfam" id="PF00276">
    <property type="entry name" value="Ribosomal_L23"/>
    <property type="match status" value="1"/>
</dbReference>
<dbReference type="SUPFAM" id="SSF54189">
    <property type="entry name" value="Ribosomal proteins S24e, L23 and L15e"/>
    <property type="match status" value="1"/>
</dbReference>
<organism>
    <name type="scientific">Chlorobium phaeobacteroides (strain DSM 266 / SMG 266 / 2430)</name>
    <dbReference type="NCBI Taxonomy" id="290317"/>
    <lineage>
        <taxon>Bacteria</taxon>
        <taxon>Pseudomonadati</taxon>
        <taxon>Chlorobiota</taxon>
        <taxon>Chlorobiia</taxon>
        <taxon>Chlorobiales</taxon>
        <taxon>Chlorobiaceae</taxon>
        <taxon>Chlorobium/Pelodictyon group</taxon>
        <taxon>Chlorobium</taxon>
    </lineage>
</organism>
<evidence type="ECO:0000255" key="1">
    <source>
        <dbReference type="HAMAP-Rule" id="MF_01369"/>
    </source>
</evidence>
<evidence type="ECO:0000305" key="2"/>